<comment type="similarity">
    <text evidence="1">Belongs to the GATS family.</text>
</comment>
<comment type="caution">
    <text evidence="1">Product of a dubious CDS prediction. The transcript contains several 3' non-coding exons. May be produced at very low levels due to a premature stop codon in the mRNA, leading to nonsense-mediated mRNA decay.</text>
</comment>
<comment type="sequence caution" evidence="1">
    <conflict type="erroneous initiation">
        <sequence resource="EMBL-CDS" id="AAH33723"/>
    </conflict>
    <text>Extended N-terminus.</text>
</comment>
<comment type="sequence caution" evidence="1">
    <conflict type="erroneous initiation">
        <sequence resource="EMBL-CDS" id="AAH53367"/>
    </conflict>
    <text>Extended N-terminus.</text>
</comment>
<comment type="sequence caution" evidence="1">
    <conflict type="erroneous initiation">
        <sequence resource="EMBL-CDS" id="AAH65200"/>
    </conflict>
    <text>Extended N-terminus.</text>
</comment>
<organism>
    <name type="scientific">Homo sapiens</name>
    <name type="common">Human</name>
    <dbReference type="NCBI Taxonomy" id="9606"/>
    <lineage>
        <taxon>Eukaryota</taxon>
        <taxon>Metazoa</taxon>
        <taxon>Chordata</taxon>
        <taxon>Craniata</taxon>
        <taxon>Vertebrata</taxon>
        <taxon>Euteleostomi</taxon>
        <taxon>Mammalia</taxon>
        <taxon>Eutheria</taxon>
        <taxon>Euarchontoglires</taxon>
        <taxon>Primates</taxon>
        <taxon>Haplorrhini</taxon>
        <taxon>Catarrhini</taxon>
        <taxon>Hominidae</taxon>
        <taxon>Homo</taxon>
    </lineage>
</organism>
<accession>Q8NAP1</accession>
<accession>D6W5V0</accession>
<accession>Q68D93</accession>
<accession>Q6P198</accession>
<accession>Q6PII7</accession>
<accession>Q7Z720</accession>
<accession>Q86UK9</accession>
<gene>
    <name evidence="2" type="primary">CASTOR3P</name>
    <name type="synonym">CASTOR3</name>
    <name type="synonym">GATS</name>
    <name type="synonym">STAG3OS</name>
</gene>
<evidence type="ECO:0000305" key="1"/>
<evidence type="ECO:0000312" key="2">
    <source>
        <dbReference type="HGNC" id="HGNC:29954"/>
    </source>
</evidence>
<keyword id="KW-1185">Reference proteome</keyword>
<protein>
    <recommendedName>
        <fullName evidence="1">Putative protein CASTOR3P</fullName>
    </recommendedName>
    <alternativeName>
        <fullName evidence="2">CASTOR3 pseudogene</fullName>
    </alternativeName>
    <alternativeName>
        <fullName evidence="1">STAG3 opposite strand transcript protein</fullName>
    </alternativeName>
</protein>
<sequence>MSCRGRGAGGRWNSTSWSTGCKLPASPRRVSRCSPTGLIKLAFLFSKTRCKFFSLTETPEDYTIIVDEEGFLELPSSEHLSVADATWLALNVVSGGGSFSSSQPIGMTKIAKSVIAPLADQNISVFMLSTYQTDFILVLKRDLPFVTHTLSSEFTILWSVARL</sequence>
<name>CAST3_HUMAN</name>
<dbReference type="EMBL" id="AK092358">
    <property type="protein sequence ID" value="BAC03870.1"/>
    <property type="molecule type" value="mRNA"/>
</dbReference>
<dbReference type="EMBL" id="AK290039">
    <property type="protein sequence ID" value="BAF82728.1"/>
    <property type="molecule type" value="mRNA"/>
</dbReference>
<dbReference type="EMBL" id="AK290237">
    <property type="protein sequence ID" value="BAF82926.1"/>
    <property type="molecule type" value="mRNA"/>
</dbReference>
<dbReference type="EMBL" id="AK290510">
    <property type="protein sequence ID" value="BAF83199.1"/>
    <property type="molecule type" value="mRNA"/>
</dbReference>
<dbReference type="EMBL" id="CR749506">
    <property type="protein sequence ID" value="CAH18327.1"/>
    <property type="molecule type" value="mRNA"/>
</dbReference>
<dbReference type="EMBL" id="CH471091">
    <property type="protein sequence ID" value="EAW76563.1"/>
    <property type="molecule type" value="Genomic_DNA"/>
</dbReference>
<dbReference type="EMBL" id="CH471091">
    <property type="protein sequence ID" value="EAW76564.1"/>
    <property type="molecule type" value="Genomic_DNA"/>
</dbReference>
<dbReference type="EMBL" id="CH471091">
    <property type="protein sequence ID" value="EAW76565.1"/>
    <property type="molecule type" value="Genomic_DNA"/>
</dbReference>
<dbReference type="EMBL" id="BC033723">
    <property type="protein sequence ID" value="AAH33723.1"/>
    <property type="status" value="ALT_INIT"/>
    <property type="molecule type" value="mRNA"/>
</dbReference>
<dbReference type="EMBL" id="BC044886">
    <property type="protein sequence ID" value="AAH44886.2"/>
    <property type="molecule type" value="mRNA"/>
</dbReference>
<dbReference type="EMBL" id="BC053367">
    <property type="protein sequence ID" value="AAH53367.1"/>
    <property type="status" value="ALT_INIT"/>
    <property type="molecule type" value="mRNA"/>
</dbReference>
<dbReference type="EMBL" id="BC065200">
    <property type="protein sequence ID" value="AAH65200.1"/>
    <property type="status" value="ALT_INIT"/>
    <property type="molecule type" value="mRNA"/>
</dbReference>
<dbReference type="EMBL" id="BC090867">
    <property type="protein sequence ID" value="AAH90867.1"/>
    <property type="molecule type" value="mRNA"/>
</dbReference>
<dbReference type="RefSeq" id="NP_849153.3">
    <property type="nucleotide sequence ID" value="NM_178831.6"/>
</dbReference>
<dbReference type="SMR" id="Q8NAP1"/>
<dbReference type="BioGRID" id="131583">
    <property type="interactions" value="21"/>
</dbReference>
<dbReference type="FunCoup" id="Q8NAP1">
    <property type="interactions" value="28"/>
</dbReference>
<dbReference type="IntAct" id="Q8NAP1">
    <property type="interactions" value="7"/>
</dbReference>
<dbReference type="STRING" id="9606.ENSP00000389760"/>
<dbReference type="GlyGen" id="Q8NAP1">
    <property type="glycosylation" value="1 site, 1 O-linked glycan (1 site)"/>
</dbReference>
<dbReference type="iPTMnet" id="Q8NAP1"/>
<dbReference type="PhosphoSitePlus" id="Q8NAP1"/>
<dbReference type="BioMuta" id="GATS"/>
<dbReference type="DMDM" id="74729973"/>
<dbReference type="MassIVE" id="Q8NAP1"/>
<dbReference type="PaxDb" id="9606-ENSP00000389760"/>
<dbReference type="DNASU" id="352954"/>
<dbReference type="UCSC" id="uc003uua.5">
    <property type="organism name" value="human"/>
</dbReference>
<dbReference type="AGR" id="HGNC:29954"/>
<dbReference type="DisGeNET" id="352954"/>
<dbReference type="GeneCards" id="CASTOR3P"/>
<dbReference type="HGNC" id="HGNC:29954">
    <property type="gene designation" value="CASTOR3P"/>
</dbReference>
<dbReference type="neXtProt" id="NX_Q8NAP1"/>
<dbReference type="PharmGKB" id="PA164720213"/>
<dbReference type="eggNOG" id="ENOG502QV83">
    <property type="taxonomic scope" value="Eukaryota"/>
</dbReference>
<dbReference type="HOGENOM" id="CLU_125526_0_0_1"/>
<dbReference type="InParanoid" id="Q8NAP1"/>
<dbReference type="PAN-GO" id="Q8NAP1">
    <property type="GO annotations" value="3 GO annotations based on evolutionary models"/>
</dbReference>
<dbReference type="PhylomeDB" id="Q8NAP1"/>
<dbReference type="PathwayCommons" id="Q8NAP1"/>
<dbReference type="SignaLink" id="Q8NAP1"/>
<dbReference type="BioGRID-ORCS" id="352954">
    <property type="hits" value="70 hits in 1050 CRISPR screens"/>
</dbReference>
<dbReference type="ChiTaRS" id="CASTOR3">
    <property type="organism name" value="human"/>
</dbReference>
<dbReference type="GenomeRNAi" id="352954"/>
<dbReference type="Pharos" id="Q8NAP1">
    <property type="development level" value="Tdark"/>
</dbReference>
<dbReference type="Proteomes" id="UP000005640">
    <property type="component" value="Chromosome 7"/>
</dbReference>
<dbReference type="RNAct" id="Q8NAP1">
    <property type="molecule type" value="protein"/>
</dbReference>
<dbReference type="GO" id="GO:0005829">
    <property type="term" value="C:cytosol"/>
    <property type="evidence" value="ECO:0000318"/>
    <property type="project" value="GO_Central"/>
</dbReference>
<dbReference type="GO" id="GO:1903577">
    <property type="term" value="P:cellular response to L-arginine"/>
    <property type="evidence" value="ECO:0000318"/>
    <property type="project" value="GO_Central"/>
</dbReference>
<dbReference type="GO" id="GO:1904262">
    <property type="term" value="P:negative regulation of TORC1 signaling"/>
    <property type="evidence" value="ECO:0000318"/>
    <property type="project" value="GO_Central"/>
</dbReference>
<dbReference type="FunFam" id="3.30.2130.10:FF:000003">
    <property type="entry name" value="Cytosolic arginine sensor for mTORC1 subunit 1"/>
    <property type="match status" value="1"/>
</dbReference>
<dbReference type="Gene3D" id="3.30.2130.10">
    <property type="entry name" value="VC0802-like"/>
    <property type="match status" value="1"/>
</dbReference>
<dbReference type="InterPro" id="IPR045865">
    <property type="entry name" value="ACT-like_dom_sf"/>
</dbReference>
<dbReference type="InterPro" id="IPR040778">
    <property type="entry name" value="CASTOR1_N"/>
</dbReference>
<dbReference type="InterPro" id="IPR027795">
    <property type="entry name" value="CASTOR_ACT_dom"/>
</dbReference>
<dbReference type="InterPro" id="IPR026249">
    <property type="entry name" value="CASTOR_fam"/>
</dbReference>
<dbReference type="InterPro" id="IPR051719">
    <property type="entry name" value="CASTOR_mTORC1"/>
</dbReference>
<dbReference type="PANTHER" id="PTHR31131">
    <property type="entry name" value="CHROMOSOME 1, WHOLE GENOME SHOTGUN SEQUENCE"/>
    <property type="match status" value="1"/>
</dbReference>
<dbReference type="PANTHER" id="PTHR31131:SF12">
    <property type="entry name" value="PROTEIN CASTOR3P-RELATED"/>
    <property type="match status" value="1"/>
</dbReference>
<dbReference type="Pfam" id="PF13840">
    <property type="entry name" value="ACT_7"/>
    <property type="match status" value="1"/>
</dbReference>
<dbReference type="Pfam" id="PF18700">
    <property type="entry name" value="Castor1_N"/>
    <property type="match status" value="1"/>
</dbReference>
<dbReference type="PRINTS" id="PR02078">
    <property type="entry name" value="GATSLIKEFMLY"/>
</dbReference>
<dbReference type="SUPFAM" id="SSF55021">
    <property type="entry name" value="ACT-like"/>
    <property type="match status" value="1"/>
</dbReference>
<feature type="chain" id="PRO_0000325892" description="Putative protein CASTOR3P">
    <location>
        <begin position="1"/>
        <end position="163"/>
    </location>
</feature>
<feature type="sequence conflict" description="In Ref. 4; AAH44886." evidence="1" ref="4">
    <original>E</original>
    <variation>G</variation>
    <location>
        <position position="78"/>
    </location>
</feature>
<feature type="sequence conflict" description="In Ref. 2; CAH18327." evidence="1" ref="2">
    <original>V</original>
    <variation>A</variation>
    <location>
        <position position="82"/>
    </location>
</feature>
<feature type="sequence conflict" description="In Ref. 2; CAH18327." evidence="1" ref="2">
    <original>L</original>
    <variation>P</variation>
    <location>
        <position position="90"/>
    </location>
</feature>
<reference key="1">
    <citation type="journal article" date="2004" name="Nat. Genet.">
        <title>Complete sequencing and characterization of 21,243 full-length human cDNAs.</title>
        <authorList>
            <person name="Ota T."/>
            <person name="Suzuki Y."/>
            <person name="Nishikawa T."/>
            <person name="Otsuki T."/>
            <person name="Sugiyama T."/>
            <person name="Irie R."/>
            <person name="Wakamatsu A."/>
            <person name="Hayashi K."/>
            <person name="Sato H."/>
            <person name="Nagai K."/>
            <person name="Kimura K."/>
            <person name="Makita H."/>
            <person name="Sekine M."/>
            <person name="Obayashi M."/>
            <person name="Nishi T."/>
            <person name="Shibahara T."/>
            <person name="Tanaka T."/>
            <person name="Ishii S."/>
            <person name="Yamamoto J."/>
            <person name="Saito K."/>
            <person name="Kawai Y."/>
            <person name="Isono Y."/>
            <person name="Nakamura Y."/>
            <person name="Nagahari K."/>
            <person name="Murakami K."/>
            <person name="Yasuda T."/>
            <person name="Iwayanagi T."/>
            <person name="Wagatsuma M."/>
            <person name="Shiratori A."/>
            <person name="Sudo H."/>
            <person name="Hosoiri T."/>
            <person name="Kaku Y."/>
            <person name="Kodaira H."/>
            <person name="Kondo H."/>
            <person name="Sugawara M."/>
            <person name="Takahashi M."/>
            <person name="Kanda K."/>
            <person name="Yokoi T."/>
            <person name="Furuya T."/>
            <person name="Kikkawa E."/>
            <person name="Omura Y."/>
            <person name="Abe K."/>
            <person name="Kamihara K."/>
            <person name="Katsuta N."/>
            <person name="Sato K."/>
            <person name="Tanikawa M."/>
            <person name="Yamazaki M."/>
            <person name="Ninomiya K."/>
            <person name="Ishibashi T."/>
            <person name="Yamashita H."/>
            <person name="Murakawa K."/>
            <person name="Fujimori K."/>
            <person name="Tanai H."/>
            <person name="Kimata M."/>
            <person name="Watanabe M."/>
            <person name="Hiraoka S."/>
            <person name="Chiba Y."/>
            <person name="Ishida S."/>
            <person name="Ono Y."/>
            <person name="Takiguchi S."/>
            <person name="Watanabe S."/>
            <person name="Yosida M."/>
            <person name="Hotuta T."/>
            <person name="Kusano J."/>
            <person name="Kanehori K."/>
            <person name="Takahashi-Fujii A."/>
            <person name="Hara H."/>
            <person name="Tanase T.-O."/>
            <person name="Nomura Y."/>
            <person name="Togiya S."/>
            <person name="Komai F."/>
            <person name="Hara R."/>
            <person name="Takeuchi K."/>
            <person name="Arita M."/>
            <person name="Imose N."/>
            <person name="Musashino K."/>
            <person name="Yuuki H."/>
            <person name="Oshima A."/>
            <person name="Sasaki N."/>
            <person name="Aotsuka S."/>
            <person name="Yoshikawa Y."/>
            <person name="Matsunawa H."/>
            <person name="Ichihara T."/>
            <person name="Shiohata N."/>
            <person name="Sano S."/>
            <person name="Moriya S."/>
            <person name="Momiyama H."/>
            <person name="Satoh N."/>
            <person name="Takami S."/>
            <person name="Terashima Y."/>
            <person name="Suzuki O."/>
            <person name="Nakagawa S."/>
            <person name="Senoh A."/>
            <person name="Mizoguchi H."/>
            <person name="Goto Y."/>
            <person name="Shimizu F."/>
            <person name="Wakebe H."/>
            <person name="Hishigaki H."/>
            <person name="Watanabe T."/>
            <person name="Sugiyama A."/>
            <person name="Takemoto M."/>
            <person name="Kawakami B."/>
            <person name="Yamazaki M."/>
            <person name="Watanabe K."/>
            <person name="Kumagai A."/>
            <person name="Itakura S."/>
            <person name="Fukuzumi Y."/>
            <person name="Fujimori Y."/>
            <person name="Komiyama M."/>
            <person name="Tashiro H."/>
            <person name="Tanigami A."/>
            <person name="Fujiwara T."/>
            <person name="Ono T."/>
            <person name="Yamada K."/>
            <person name="Fujii Y."/>
            <person name="Ozaki K."/>
            <person name="Hirao M."/>
            <person name="Ohmori Y."/>
            <person name="Kawabata A."/>
            <person name="Hikiji T."/>
            <person name="Kobatake N."/>
            <person name="Inagaki H."/>
            <person name="Ikema Y."/>
            <person name="Okamoto S."/>
            <person name="Okitani R."/>
            <person name="Kawakami T."/>
            <person name="Noguchi S."/>
            <person name="Itoh T."/>
            <person name="Shigeta K."/>
            <person name="Senba T."/>
            <person name="Matsumura K."/>
            <person name="Nakajima Y."/>
            <person name="Mizuno T."/>
            <person name="Morinaga M."/>
            <person name="Sasaki M."/>
            <person name="Togashi T."/>
            <person name="Oyama M."/>
            <person name="Hata H."/>
            <person name="Watanabe M."/>
            <person name="Komatsu T."/>
            <person name="Mizushima-Sugano J."/>
            <person name="Satoh T."/>
            <person name="Shirai Y."/>
            <person name="Takahashi Y."/>
            <person name="Nakagawa K."/>
            <person name="Okumura K."/>
            <person name="Nagase T."/>
            <person name="Nomura N."/>
            <person name="Kikuchi H."/>
            <person name="Masuho Y."/>
            <person name="Yamashita R."/>
            <person name="Nakai K."/>
            <person name="Yada T."/>
            <person name="Nakamura Y."/>
            <person name="Ohara O."/>
            <person name="Isogai T."/>
            <person name="Sugano S."/>
        </authorList>
    </citation>
    <scope>NUCLEOTIDE SEQUENCE [LARGE SCALE MRNA]</scope>
    <source>
        <tissue>Brain</tissue>
        <tissue>Hippocampus</tissue>
        <tissue>Thalamus</tissue>
    </source>
</reference>
<reference key="2">
    <citation type="journal article" date="2007" name="BMC Genomics">
        <title>The full-ORF clone resource of the German cDNA consortium.</title>
        <authorList>
            <person name="Bechtel S."/>
            <person name="Rosenfelder H."/>
            <person name="Duda A."/>
            <person name="Schmidt C.P."/>
            <person name="Ernst U."/>
            <person name="Wellenreuther R."/>
            <person name="Mehrle A."/>
            <person name="Schuster C."/>
            <person name="Bahr A."/>
            <person name="Bloecker H."/>
            <person name="Heubner D."/>
            <person name="Hoerlein A."/>
            <person name="Michel G."/>
            <person name="Wedler H."/>
            <person name="Koehrer K."/>
            <person name="Ottenwaelder B."/>
            <person name="Poustka A."/>
            <person name="Wiemann S."/>
            <person name="Schupp I."/>
        </authorList>
    </citation>
    <scope>NUCLEOTIDE SEQUENCE [LARGE SCALE MRNA]</scope>
    <source>
        <tissue>Cerebellum</tissue>
    </source>
</reference>
<reference key="3">
    <citation type="submission" date="2005-09" db="EMBL/GenBank/DDBJ databases">
        <authorList>
            <person name="Mural R.J."/>
            <person name="Istrail S."/>
            <person name="Sutton G.G."/>
            <person name="Florea L."/>
            <person name="Halpern A.L."/>
            <person name="Mobarry C.M."/>
            <person name="Lippert R."/>
            <person name="Walenz B."/>
            <person name="Shatkay H."/>
            <person name="Dew I."/>
            <person name="Miller J.R."/>
            <person name="Flanigan M.J."/>
            <person name="Edwards N.J."/>
            <person name="Bolanos R."/>
            <person name="Fasulo D."/>
            <person name="Halldorsson B.V."/>
            <person name="Hannenhalli S."/>
            <person name="Turner R."/>
            <person name="Yooseph S."/>
            <person name="Lu F."/>
            <person name="Nusskern D.R."/>
            <person name="Shue B.C."/>
            <person name="Zheng X.H."/>
            <person name="Zhong F."/>
            <person name="Delcher A.L."/>
            <person name="Huson D.H."/>
            <person name="Kravitz S.A."/>
            <person name="Mouchard L."/>
            <person name="Reinert K."/>
            <person name="Remington K.A."/>
            <person name="Clark A.G."/>
            <person name="Waterman M.S."/>
            <person name="Eichler E.E."/>
            <person name="Adams M.D."/>
            <person name="Hunkapiller M.W."/>
            <person name="Myers E.W."/>
            <person name="Venter J.C."/>
        </authorList>
    </citation>
    <scope>NUCLEOTIDE SEQUENCE [LARGE SCALE GENOMIC DNA]</scope>
</reference>
<reference key="4">
    <citation type="journal article" date="2004" name="Genome Res.">
        <title>The status, quality, and expansion of the NIH full-length cDNA project: the Mammalian Gene Collection (MGC).</title>
        <authorList>
            <consortium name="The MGC Project Team"/>
        </authorList>
    </citation>
    <scope>NUCLEOTIDE SEQUENCE [LARGE SCALE MRNA]</scope>
    <source>
        <tissue>Brain</tissue>
        <tissue>Eye</tissue>
        <tissue>PNS</tissue>
        <tissue>Uterus</tissue>
    </source>
</reference>
<proteinExistence type="uncertain"/>